<sequence length="172" mass="19294">MFYHISLEHEILLHPRYFGPNLLNTVKQKLFTEVEGTCTGKYGFVIAVTTIDNIGAGVIQPGRGFVLYPVKYKAIVFRPFKGEVVDAVVTQVNKVGLFTEIGPMSCFISRHSIPSEMEFDPNSNPPCYKTMDEDIVIQQDDEIRLKIVGTRVDKNDIFAIGSLMDDYLGLVS</sequence>
<dbReference type="EMBL" id="U20659">
    <property type="protein sequence ID" value="AAA86500.1"/>
    <property type="molecule type" value="mRNA"/>
</dbReference>
<dbReference type="EMBL" id="U52427">
    <property type="protein sequence ID" value="AAB96827.1"/>
    <property type="molecule type" value="Genomic_DNA"/>
</dbReference>
<dbReference type="EMBL" id="AK312131">
    <property type="protein sequence ID" value="BAG35067.1"/>
    <property type="molecule type" value="mRNA"/>
</dbReference>
<dbReference type="EMBL" id="CH471076">
    <property type="protein sequence ID" value="EAW74092.1"/>
    <property type="molecule type" value="Genomic_DNA"/>
</dbReference>
<dbReference type="EMBL" id="BC112162">
    <property type="protein sequence ID" value="AAI12163.1"/>
    <property type="molecule type" value="mRNA"/>
</dbReference>
<dbReference type="EMBL" id="BC112164">
    <property type="protein sequence ID" value="AAI12165.1"/>
    <property type="molecule type" value="mRNA"/>
</dbReference>
<dbReference type="CCDS" id="CCDS31585.1"/>
<dbReference type="RefSeq" id="NP_002687.1">
    <property type="nucleotide sequence ID" value="NM_002696.3"/>
</dbReference>
<dbReference type="PDB" id="2C35">
    <property type="method" value="X-ray"/>
    <property type="resolution" value="2.70 A"/>
    <property type="chains" value="B/D/F/H=1-172"/>
</dbReference>
<dbReference type="PDB" id="5IY6">
    <property type="method" value="EM"/>
    <property type="resolution" value="7.20 A"/>
    <property type="chains" value="G=1-172"/>
</dbReference>
<dbReference type="PDB" id="5IY7">
    <property type="method" value="EM"/>
    <property type="resolution" value="8.60 A"/>
    <property type="chains" value="G=1-172"/>
</dbReference>
<dbReference type="PDB" id="5IY8">
    <property type="method" value="EM"/>
    <property type="resolution" value="7.90 A"/>
    <property type="chains" value="G=1-172"/>
</dbReference>
<dbReference type="PDB" id="5IY9">
    <property type="method" value="EM"/>
    <property type="resolution" value="6.30 A"/>
    <property type="chains" value="G=1-172"/>
</dbReference>
<dbReference type="PDB" id="5IYA">
    <property type="method" value="EM"/>
    <property type="resolution" value="5.40 A"/>
    <property type="chains" value="G=1-172"/>
</dbReference>
<dbReference type="PDB" id="5IYB">
    <property type="method" value="EM"/>
    <property type="resolution" value="3.90 A"/>
    <property type="chains" value="G=1-172"/>
</dbReference>
<dbReference type="PDB" id="5IYC">
    <property type="method" value="EM"/>
    <property type="resolution" value="3.90 A"/>
    <property type="chains" value="G=1-172"/>
</dbReference>
<dbReference type="PDB" id="5IYD">
    <property type="method" value="EM"/>
    <property type="resolution" value="3.90 A"/>
    <property type="chains" value="G=1-172"/>
</dbReference>
<dbReference type="PDB" id="6DRD">
    <property type="method" value="EM"/>
    <property type="resolution" value="3.90 A"/>
    <property type="chains" value="G=1-172"/>
</dbReference>
<dbReference type="PDB" id="6O9L">
    <property type="method" value="EM"/>
    <property type="resolution" value="7.20 A"/>
    <property type="chains" value="G=1-172"/>
</dbReference>
<dbReference type="PDB" id="6XRE">
    <property type="method" value="EM"/>
    <property type="resolution" value="4.60 A"/>
    <property type="chains" value="G=1-172"/>
</dbReference>
<dbReference type="PDB" id="7LBM">
    <property type="method" value="EM"/>
    <property type="resolution" value="4.80 A"/>
    <property type="chains" value="G=1-172"/>
</dbReference>
<dbReference type="PDB" id="9EHZ">
    <property type="method" value="EM"/>
    <property type="resolution" value="2.60 A"/>
    <property type="chains" value="G=1-172"/>
</dbReference>
<dbReference type="PDB" id="9EI1">
    <property type="method" value="EM"/>
    <property type="resolution" value="3.20 A"/>
    <property type="chains" value="G=1-172"/>
</dbReference>
<dbReference type="PDB" id="9EI3">
    <property type="method" value="EM"/>
    <property type="resolution" value="3.20 A"/>
    <property type="chains" value="G=1-172"/>
</dbReference>
<dbReference type="PDB" id="9EI4">
    <property type="method" value="EM"/>
    <property type="resolution" value="3.70 A"/>
    <property type="chains" value="G=1-172"/>
</dbReference>
<dbReference type="PDBsum" id="2C35"/>
<dbReference type="PDBsum" id="5IY6"/>
<dbReference type="PDBsum" id="5IY7"/>
<dbReference type="PDBsum" id="5IY8"/>
<dbReference type="PDBsum" id="5IY9"/>
<dbReference type="PDBsum" id="5IYA"/>
<dbReference type="PDBsum" id="5IYB"/>
<dbReference type="PDBsum" id="5IYC"/>
<dbReference type="PDBsum" id="5IYD"/>
<dbReference type="PDBsum" id="6DRD"/>
<dbReference type="PDBsum" id="6O9L"/>
<dbReference type="PDBsum" id="6XRE"/>
<dbReference type="PDBsum" id="7LBM"/>
<dbReference type="PDBsum" id="9EHZ"/>
<dbReference type="PDBsum" id="9EI1"/>
<dbReference type="PDBsum" id="9EI3"/>
<dbReference type="PDBsum" id="9EI4"/>
<dbReference type="EMDB" id="EMD-22294"/>
<dbReference type="EMDB" id="EMD-23255"/>
<dbReference type="EMDB" id="EMD-48071"/>
<dbReference type="EMDB" id="EMD-48073"/>
<dbReference type="EMDB" id="EMD-48075"/>
<dbReference type="EMDB" id="EMD-48076"/>
<dbReference type="EMDB" id="EMD-7997"/>
<dbReference type="EMDB" id="EMD-8132"/>
<dbReference type="EMDB" id="EMD-8133"/>
<dbReference type="EMDB" id="EMD-8134"/>
<dbReference type="EMDB" id="EMD-8135"/>
<dbReference type="EMDB" id="EMD-8136"/>
<dbReference type="EMDB" id="EMD-8137"/>
<dbReference type="EMDB" id="EMD-8138"/>
<dbReference type="SMR" id="P62487"/>
<dbReference type="BioGRID" id="111432">
    <property type="interactions" value="188"/>
</dbReference>
<dbReference type="ComplexPortal" id="CPX-2387">
    <property type="entry name" value="DNA-directed RNA polymerase II complex, Pol II(G) variant"/>
</dbReference>
<dbReference type="ComplexPortal" id="CPX-7481">
    <property type="entry name" value="DNA-directed RNA polymerase II complex"/>
</dbReference>
<dbReference type="CORUM" id="P62487"/>
<dbReference type="DIP" id="DIP-32663N"/>
<dbReference type="FunCoup" id="P62487">
    <property type="interactions" value="2798"/>
</dbReference>
<dbReference type="IntAct" id="P62487">
    <property type="interactions" value="119"/>
</dbReference>
<dbReference type="MINT" id="P62487"/>
<dbReference type="STRING" id="9606.ENSP00000301788"/>
<dbReference type="iPTMnet" id="P62487"/>
<dbReference type="MetOSite" id="P62487"/>
<dbReference type="PhosphoSitePlus" id="P62487"/>
<dbReference type="SwissPalm" id="P62487"/>
<dbReference type="BioMuta" id="POLR2G"/>
<dbReference type="DMDM" id="50403601"/>
<dbReference type="jPOST" id="P62487"/>
<dbReference type="MassIVE" id="P62487"/>
<dbReference type="PaxDb" id="9606-ENSP00000301788"/>
<dbReference type="PeptideAtlas" id="P62487"/>
<dbReference type="ProteomicsDB" id="57401"/>
<dbReference type="Pumba" id="P62487"/>
<dbReference type="Antibodypedia" id="14963">
    <property type="antibodies" value="224 antibodies from 31 providers"/>
</dbReference>
<dbReference type="DNASU" id="5436"/>
<dbReference type="Ensembl" id="ENST00000301788.12">
    <property type="protein sequence ID" value="ENSP00000301788.7"/>
    <property type="gene ID" value="ENSG00000168002.12"/>
</dbReference>
<dbReference type="GeneID" id="5436"/>
<dbReference type="KEGG" id="hsa:5436"/>
<dbReference type="MANE-Select" id="ENST00000301788.12">
    <property type="protein sequence ID" value="ENSP00000301788.7"/>
    <property type="RefSeq nucleotide sequence ID" value="NM_002696.3"/>
    <property type="RefSeq protein sequence ID" value="NP_002687.1"/>
</dbReference>
<dbReference type="UCSC" id="uc001nva.4">
    <property type="organism name" value="human"/>
</dbReference>
<dbReference type="AGR" id="HGNC:9194"/>
<dbReference type="CTD" id="5436"/>
<dbReference type="DisGeNET" id="5436"/>
<dbReference type="GeneCards" id="POLR2G"/>
<dbReference type="HGNC" id="HGNC:9194">
    <property type="gene designation" value="POLR2G"/>
</dbReference>
<dbReference type="HPA" id="ENSG00000168002">
    <property type="expression patterns" value="Low tissue specificity"/>
</dbReference>
<dbReference type="MIM" id="602013">
    <property type="type" value="gene"/>
</dbReference>
<dbReference type="neXtProt" id="NX_P62487"/>
<dbReference type="OpenTargets" id="ENSG00000168002"/>
<dbReference type="PharmGKB" id="PA33514"/>
<dbReference type="VEuPathDB" id="HostDB:ENSG00000168002"/>
<dbReference type="eggNOG" id="KOG3298">
    <property type="taxonomic scope" value="Eukaryota"/>
</dbReference>
<dbReference type="GeneTree" id="ENSGT00390000008975"/>
<dbReference type="HOGENOM" id="CLU_085878_2_0_1"/>
<dbReference type="InParanoid" id="P62487"/>
<dbReference type="OMA" id="TMRQPGL"/>
<dbReference type="OrthoDB" id="1162399at2759"/>
<dbReference type="PAN-GO" id="P62487">
    <property type="GO annotations" value="9 GO annotations based on evolutionary models"/>
</dbReference>
<dbReference type="PhylomeDB" id="P62487"/>
<dbReference type="TreeFam" id="TF103042"/>
<dbReference type="PathwayCommons" id="P62487"/>
<dbReference type="Reactome" id="R-HSA-112382">
    <property type="pathway name" value="Formation of RNA Pol II elongation complex"/>
</dbReference>
<dbReference type="Reactome" id="R-HSA-113418">
    <property type="pathway name" value="Formation of the Early Elongation Complex"/>
</dbReference>
<dbReference type="Reactome" id="R-HSA-167152">
    <property type="pathway name" value="Formation of HIV elongation complex in the absence of HIV Tat"/>
</dbReference>
<dbReference type="Reactome" id="R-HSA-167158">
    <property type="pathway name" value="Formation of the HIV-1 Early Elongation Complex"/>
</dbReference>
<dbReference type="Reactome" id="R-HSA-167160">
    <property type="pathway name" value="RNA Pol II CTD phosphorylation and interaction with CE during HIV infection"/>
</dbReference>
<dbReference type="Reactome" id="R-HSA-167161">
    <property type="pathway name" value="HIV Transcription Initiation"/>
</dbReference>
<dbReference type="Reactome" id="R-HSA-167162">
    <property type="pathway name" value="RNA Polymerase II HIV Promoter Escape"/>
</dbReference>
<dbReference type="Reactome" id="R-HSA-167172">
    <property type="pathway name" value="Transcription of the HIV genome"/>
</dbReference>
<dbReference type="Reactome" id="R-HSA-167200">
    <property type="pathway name" value="Formation of HIV-1 elongation complex containing HIV-1 Tat"/>
</dbReference>
<dbReference type="Reactome" id="R-HSA-167238">
    <property type="pathway name" value="Pausing and recovery of Tat-mediated HIV elongation"/>
</dbReference>
<dbReference type="Reactome" id="R-HSA-167242">
    <property type="pathway name" value="Abortive elongation of HIV-1 transcript in the absence of Tat"/>
</dbReference>
<dbReference type="Reactome" id="R-HSA-167243">
    <property type="pathway name" value="Tat-mediated HIV elongation arrest and recovery"/>
</dbReference>
<dbReference type="Reactome" id="R-HSA-167246">
    <property type="pathway name" value="Tat-mediated elongation of the HIV-1 transcript"/>
</dbReference>
<dbReference type="Reactome" id="R-HSA-167287">
    <property type="pathway name" value="HIV elongation arrest and recovery"/>
</dbReference>
<dbReference type="Reactome" id="R-HSA-167290">
    <property type="pathway name" value="Pausing and recovery of HIV elongation"/>
</dbReference>
<dbReference type="Reactome" id="R-HSA-168325">
    <property type="pathway name" value="Viral Messenger RNA Synthesis"/>
</dbReference>
<dbReference type="Reactome" id="R-HSA-203927">
    <property type="pathway name" value="MicroRNA (miRNA) biogenesis"/>
</dbReference>
<dbReference type="Reactome" id="R-HSA-5578749">
    <property type="pathway name" value="Transcriptional regulation by small RNAs"/>
</dbReference>
<dbReference type="Reactome" id="R-HSA-5601884">
    <property type="pathway name" value="PIWI-interacting RNA (piRNA) biogenesis"/>
</dbReference>
<dbReference type="Reactome" id="R-HSA-5617472">
    <property type="pathway name" value="Activation of anterior HOX genes in hindbrain development during early embryogenesis"/>
</dbReference>
<dbReference type="Reactome" id="R-HSA-674695">
    <property type="pathway name" value="RNA Polymerase II Pre-transcription Events"/>
</dbReference>
<dbReference type="Reactome" id="R-HSA-6781823">
    <property type="pathway name" value="Formation of TC-NER Pre-Incision Complex"/>
</dbReference>
<dbReference type="Reactome" id="R-HSA-6781827">
    <property type="pathway name" value="Transcription-Coupled Nucleotide Excision Repair (TC-NER)"/>
</dbReference>
<dbReference type="Reactome" id="R-HSA-6782135">
    <property type="pathway name" value="Dual incision in TC-NER"/>
</dbReference>
<dbReference type="Reactome" id="R-HSA-6782210">
    <property type="pathway name" value="Gap-filling DNA repair synthesis and ligation in TC-NER"/>
</dbReference>
<dbReference type="Reactome" id="R-HSA-6796648">
    <property type="pathway name" value="TP53 Regulates Transcription of DNA Repair Genes"/>
</dbReference>
<dbReference type="Reactome" id="R-HSA-6803529">
    <property type="pathway name" value="FGFR2 alternative splicing"/>
</dbReference>
<dbReference type="Reactome" id="R-HSA-6807505">
    <property type="pathway name" value="RNA polymerase II transcribes snRNA genes"/>
</dbReference>
<dbReference type="Reactome" id="R-HSA-72086">
    <property type="pathway name" value="mRNA Capping"/>
</dbReference>
<dbReference type="Reactome" id="R-HSA-72163">
    <property type="pathway name" value="mRNA Splicing - Major Pathway"/>
</dbReference>
<dbReference type="Reactome" id="R-HSA-72165">
    <property type="pathway name" value="mRNA Splicing - Minor Pathway"/>
</dbReference>
<dbReference type="Reactome" id="R-HSA-72203">
    <property type="pathway name" value="Processing of Capped Intron-Containing Pre-mRNA"/>
</dbReference>
<dbReference type="Reactome" id="R-HSA-73776">
    <property type="pathway name" value="RNA Polymerase II Promoter Escape"/>
</dbReference>
<dbReference type="Reactome" id="R-HSA-73779">
    <property type="pathway name" value="RNA Polymerase II Transcription Pre-Initiation And Promoter Opening"/>
</dbReference>
<dbReference type="Reactome" id="R-HSA-75953">
    <property type="pathway name" value="RNA Polymerase II Transcription Initiation"/>
</dbReference>
<dbReference type="Reactome" id="R-HSA-75955">
    <property type="pathway name" value="RNA Polymerase II Transcription Elongation"/>
</dbReference>
<dbReference type="Reactome" id="R-HSA-76042">
    <property type="pathway name" value="RNA Polymerase II Transcription Initiation And Promoter Clearance"/>
</dbReference>
<dbReference type="Reactome" id="R-HSA-77075">
    <property type="pathway name" value="RNA Pol II CTD phosphorylation and interaction with CE"/>
</dbReference>
<dbReference type="Reactome" id="R-HSA-8851708">
    <property type="pathway name" value="Signaling by FGFR2 IIIa TM"/>
</dbReference>
<dbReference type="Reactome" id="R-HSA-9018519">
    <property type="pathway name" value="Estrogen-dependent gene expression"/>
</dbReference>
<dbReference type="Reactome" id="R-HSA-9670095">
    <property type="pathway name" value="Inhibition of DNA recombination at telomere"/>
</dbReference>
<dbReference type="SignaLink" id="P62487"/>
<dbReference type="SIGNOR" id="P62487"/>
<dbReference type="BioGRID-ORCS" id="5436">
    <property type="hits" value="807 hits in 1164 CRISPR screens"/>
</dbReference>
<dbReference type="ChiTaRS" id="POLR2G">
    <property type="organism name" value="human"/>
</dbReference>
<dbReference type="EvolutionaryTrace" id="P62487"/>
<dbReference type="GeneWiki" id="POLR2G"/>
<dbReference type="GenomeRNAi" id="5436"/>
<dbReference type="Pharos" id="P62487">
    <property type="development level" value="Tbio"/>
</dbReference>
<dbReference type="PRO" id="PR:P62487"/>
<dbReference type="Proteomes" id="UP000005640">
    <property type="component" value="Chromosome 11"/>
</dbReference>
<dbReference type="RNAct" id="P62487">
    <property type="molecule type" value="protein"/>
</dbReference>
<dbReference type="Bgee" id="ENSG00000168002">
    <property type="expression patterns" value="Expressed in ventricular zone and 205 other cell types or tissues"/>
</dbReference>
<dbReference type="ExpressionAtlas" id="P62487">
    <property type="expression patterns" value="baseline and differential"/>
</dbReference>
<dbReference type="GO" id="GO:0005654">
    <property type="term" value="C:nucleoplasm"/>
    <property type="evidence" value="ECO:0000314"/>
    <property type="project" value="HPA"/>
</dbReference>
<dbReference type="GO" id="GO:0005634">
    <property type="term" value="C:nucleus"/>
    <property type="evidence" value="ECO:0000314"/>
    <property type="project" value="UniProtKB"/>
</dbReference>
<dbReference type="GO" id="GO:0000932">
    <property type="term" value="C:P-body"/>
    <property type="evidence" value="ECO:0000318"/>
    <property type="project" value="GO_Central"/>
</dbReference>
<dbReference type="GO" id="GO:0005665">
    <property type="term" value="C:RNA polymerase II, core complex"/>
    <property type="evidence" value="ECO:0000314"/>
    <property type="project" value="UniProtKB"/>
</dbReference>
<dbReference type="GO" id="GO:0003697">
    <property type="term" value="F:single-stranded DNA binding"/>
    <property type="evidence" value="ECO:0000318"/>
    <property type="project" value="GO_Central"/>
</dbReference>
<dbReference type="GO" id="GO:0003727">
    <property type="term" value="F:single-stranded RNA binding"/>
    <property type="evidence" value="ECO:0000318"/>
    <property type="project" value="GO_Central"/>
</dbReference>
<dbReference type="GO" id="GO:0031369">
    <property type="term" value="F:translation initiation factor binding"/>
    <property type="evidence" value="ECO:0000318"/>
    <property type="project" value="GO_Central"/>
</dbReference>
<dbReference type="GO" id="GO:0000956">
    <property type="term" value="P:nuclear-transcribed mRNA catabolic process"/>
    <property type="evidence" value="ECO:0000318"/>
    <property type="project" value="GO_Central"/>
</dbReference>
<dbReference type="GO" id="GO:0060213">
    <property type="term" value="P:positive regulation of nuclear-transcribed mRNA poly(A) tail shortening"/>
    <property type="evidence" value="ECO:0000318"/>
    <property type="project" value="GO_Central"/>
</dbReference>
<dbReference type="GO" id="GO:0045948">
    <property type="term" value="P:positive regulation of translational initiation"/>
    <property type="evidence" value="ECO:0000318"/>
    <property type="project" value="GO_Central"/>
</dbReference>
<dbReference type="GO" id="GO:0006366">
    <property type="term" value="P:transcription by RNA polymerase II"/>
    <property type="evidence" value="ECO:0000314"/>
    <property type="project" value="UniProtKB"/>
</dbReference>
<dbReference type="GO" id="GO:0006367">
    <property type="term" value="P:transcription initiation at RNA polymerase II promoter"/>
    <property type="evidence" value="ECO:0000318"/>
    <property type="project" value="GO_Central"/>
</dbReference>
<dbReference type="CDD" id="cd04329">
    <property type="entry name" value="RNAP_II_Rpb7_N"/>
    <property type="match status" value="1"/>
</dbReference>
<dbReference type="CDD" id="cd04462">
    <property type="entry name" value="S1_RNAPII_Rpb7"/>
    <property type="match status" value="1"/>
</dbReference>
<dbReference type="FunFam" id="2.40.50.140:FF:000043">
    <property type="entry name" value="DNA-directed RNA polymerase II subunit RPB7"/>
    <property type="match status" value="1"/>
</dbReference>
<dbReference type="FunFam" id="3.30.1490.120:FF:000001">
    <property type="entry name" value="DNA-directed RNA polymerase II subunit RPB7"/>
    <property type="match status" value="1"/>
</dbReference>
<dbReference type="Gene3D" id="2.40.50.140">
    <property type="entry name" value="Nucleic acid-binding proteins"/>
    <property type="match status" value="1"/>
</dbReference>
<dbReference type="Gene3D" id="3.30.1490.120">
    <property type="entry name" value="RNA polymerase Rpb7-like, N-terminal domain"/>
    <property type="match status" value="1"/>
</dbReference>
<dbReference type="InterPro" id="IPR012340">
    <property type="entry name" value="NA-bd_OB-fold"/>
</dbReference>
<dbReference type="InterPro" id="IPR036898">
    <property type="entry name" value="RNA_pol_Rpb7-like_N_sf"/>
</dbReference>
<dbReference type="InterPro" id="IPR045113">
    <property type="entry name" value="Rpb7-like"/>
</dbReference>
<dbReference type="InterPro" id="IPR005576">
    <property type="entry name" value="Rpb7-like_N"/>
</dbReference>
<dbReference type="InterPro" id="IPR003029">
    <property type="entry name" value="S1_domain"/>
</dbReference>
<dbReference type="PANTHER" id="PTHR12709:SF4">
    <property type="entry name" value="DNA-DIRECTED RNA POLYMERASE II SUBUNIT RPB7"/>
    <property type="match status" value="1"/>
</dbReference>
<dbReference type="PANTHER" id="PTHR12709">
    <property type="entry name" value="DNA-DIRECTED RNA POLYMERASE II, III"/>
    <property type="match status" value="1"/>
</dbReference>
<dbReference type="Pfam" id="PF00575">
    <property type="entry name" value="S1"/>
    <property type="match status" value="1"/>
</dbReference>
<dbReference type="Pfam" id="PF03876">
    <property type="entry name" value="SHS2_Rpb7-N"/>
    <property type="match status" value="1"/>
</dbReference>
<dbReference type="SMART" id="SM00316">
    <property type="entry name" value="S1"/>
    <property type="match status" value="1"/>
</dbReference>
<dbReference type="SUPFAM" id="SSF88798">
    <property type="entry name" value="N-terminal, heterodimerisation domain of RBP7 (RpoE)"/>
    <property type="match status" value="1"/>
</dbReference>
<dbReference type="SUPFAM" id="SSF50249">
    <property type="entry name" value="Nucleic acid-binding proteins"/>
    <property type="match status" value="1"/>
</dbReference>
<proteinExistence type="evidence at protein level"/>
<evidence type="ECO:0000250" key="1">
    <source>
        <dbReference type="UniProtKB" id="P34087"/>
    </source>
</evidence>
<evidence type="ECO:0000269" key="2">
    <source>
    </source>
</evidence>
<evidence type="ECO:0000269" key="3">
    <source>
    </source>
</evidence>
<evidence type="ECO:0000269" key="4">
    <source>
    </source>
</evidence>
<evidence type="ECO:0000269" key="5">
    <source>
    </source>
</evidence>
<evidence type="ECO:0000305" key="6"/>
<evidence type="ECO:0007829" key="7">
    <source>
        <dbReference type="PDB" id="2C35"/>
    </source>
</evidence>
<protein>
    <recommendedName>
        <fullName>DNA-directed RNA polymerase II subunit RPB7</fullName>
        <shortName>RNA polymerase II subunit B7</shortName>
    </recommendedName>
    <alternativeName>
        <fullName>DNA-directed RNA polymerase II subunit G</fullName>
    </alternativeName>
    <alternativeName>
        <fullName>RNA polymerase II 19 kDa subunit</fullName>
        <shortName>RPB19</shortName>
    </alternativeName>
</protein>
<name>RPB7_HUMAN</name>
<reference key="1">
    <citation type="journal article" date="1995" name="Mol. Biol. Cell">
        <title>Human RNA polymerase II subunit hsRPB7 functions in yeast and influences stress survival and cell morphology.</title>
        <authorList>
            <person name="Khazak V."/>
            <person name="Sadhale P.P."/>
            <person name="Woychik N.A."/>
            <person name="Brent R."/>
            <person name="Golemis E.A."/>
        </authorList>
    </citation>
    <scope>NUCLEOTIDE SEQUENCE [MRNA]</scope>
</reference>
<reference key="2">
    <citation type="journal article" date="1997" name="Biochim. Biophys. Acta">
        <title>Human gene for the RNA polymerase II seventh subunit (hsRPB7): structure, expression and chromosomal localization.</title>
        <authorList>
            <person name="Schoen T.J."/>
            <person name="Chandrasekharappa S.C."/>
            <person name="Guru S.C."/>
            <person name="Mazuruk K."/>
            <person name="Chader G.J."/>
            <person name="Rodriguez I.R."/>
        </authorList>
    </citation>
    <scope>NUCLEOTIDE SEQUENCE [GENOMIC DNA]</scope>
</reference>
<reference key="3">
    <citation type="journal article" date="2004" name="Nat. Genet.">
        <title>Complete sequencing and characterization of 21,243 full-length human cDNAs.</title>
        <authorList>
            <person name="Ota T."/>
            <person name="Suzuki Y."/>
            <person name="Nishikawa T."/>
            <person name="Otsuki T."/>
            <person name="Sugiyama T."/>
            <person name="Irie R."/>
            <person name="Wakamatsu A."/>
            <person name="Hayashi K."/>
            <person name="Sato H."/>
            <person name="Nagai K."/>
            <person name="Kimura K."/>
            <person name="Makita H."/>
            <person name="Sekine M."/>
            <person name="Obayashi M."/>
            <person name="Nishi T."/>
            <person name="Shibahara T."/>
            <person name="Tanaka T."/>
            <person name="Ishii S."/>
            <person name="Yamamoto J."/>
            <person name="Saito K."/>
            <person name="Kawai Y."/>
            <person name="Isono Y."/>
            <person name="Nakamura Y."/>
            <person name="Nagahari K."/>
            <person name="Murakami K."/>
            <person name="Yasuda T."/>
            <person name="Iwayanagi T."/>
            <person name="Wagatsuma M."/>
            <person name="Shiratori A."/>
            <person name="Sudo H."/>
            <person name="Hosoiri T."/>
            <person name="Kaku Y."/>
            <person name="Kodaira H."/>
            <person name="Kondo H."/>
            <person name="Sugawara M."/>
            <person name="Takahashi M."/>
            <person name="Kanda K."/>
            <person name="Yokoi T."/>
            <person name="Furuya T."/>
            <person name="Kikkawa E."/>
            <person name="Omura Y."/>
            <person name="Abe K."/>
            <person name="Kamihara K."/>
            <person name="Katsuta N."/>
            <person name="Sato K."/>
            <person name="Tanikawa M."/>
            <person name="Yamazaki M."/>
            <person name="Ninomiya K."/>
            <person name="Ishibashi T."/>
            <person name="Yamashita H."/>
            <person name="Murakawa K."/>
            <person name="Fujimori K."/>
            <person name="Tanai H."/>
            <person name="Kimata M."/>
            <person name="Watanabe M."/>
            <person name="Hiraoka S."/>
            <person name="Chiba Y."/>
            <person name="Ishida S."/>
            <person name="Ono Y."/>
            <person name="Takiguchi S."/>
            <person name="Watanabe S."/>
            <person name="Yosida M."/>
            <person name="Hotuta T."/>
            <person name="Kusano J."/>
            <person name="Kanehori K."/>
            <person name="Takahashi-Fujii A."/>
            <person name="Hara H."/>
            <person name="Tanase T.-O."/>
            <person name="Nomura Y."/>
            <person name="Togiya S."/>
            <person name="Komai F."/>
            <person name="Hara R."/>
            <person name="Takeuchi K."/>
            <person name="Arita M."/>
            <person name="Imose N."/>
            <person name="Musashino K."/>
            <person name="Yuuki H."/>
            <person name="Oshima A."/>
            <person name="Sasaki N."/>
            <person name="Aotsuka S."/>
            <person name="Yoshikawa Y."/>
            <person name="Matsunawa H."/>
            <person name="Ichihara T."/>
            <person name="Shiohata N."/>
            <person name="Sano S."/>
            <person name="Moriya S."/>
            <person name="Momiyama H."/>
            <person name="Satoh N."/>
            <person name="Takami S."/>
            <person name="Terashima Y."/>
            <person name="Suzuki O."/>
            <person name="Nakagawa S."/>
            <person name="Senoh A."/>
            <person name="Mizoguchi H."/>
            <person name="Goto Y."/>
            <person name="Shimizu F."/>
            <person name="Wakebe H."/>
            <person name="Hishigaki H."/>
            <person name="Watanabe T."/>
            <person name="Sugiyama A."/>
            <person name="Takemoto M."/>
            <person name="Kawakami B."/>
            <person name="Yamazaki M."/>
            <person name="Watanabe K."/>
            <person name="Kumagai A."/>
            <person name="Itakura S."/>
            <person name="Fukuzumi Y."/>
            <person name="Fujimori Y."/>
            <person name="Komiyama M."/>
            <person name="Tashiro H."/>
            <person name="Tanigami A."/>
            <person name="Fujiwara T."/>
            <person name="Ono T."/>
            <person name="Yamada K."/>
            <person name="Fujii Y."/>
            <person name="Ozaki K."/>
            <person name="Hirao M."/>
            <person name="Ohmori Y."/>
            <person name="Kawabata A."/>
            <person name="Hikiji T."/>
            <person name="Kobatake N."/>
            <person name="Inagaki H."/>
            <person name="Ikema Y."/>
            <person name="Okamoto S."/>
            <person name="Okitani R."/>
            <person name="Kawakami T."/>
            <person name="Noguchi S."/>
            <person name="Itoh T."/>
            <person name="Shigeta K."/>
            <person name="Senba T."/>
            <person name="Matsumura K."/>
            <person name="Nakajima Y."/>
            <person name="Mizuno T."/>
            <person name="Morinaga M."/>
            <person name="Sasaki M."/>
            <person name="Togashi T."/>
            <person name="Oyama M."/>
            <person name="Hata H."/>
            <person name="Watanabe M."/>
            <person name="Komatsu T."/>
            <person name="Mizushima-Sugano J."/>
            <person name="Satoh T."/>
            <person name="Shirai Y."/>
            <person name="Takahashi Y."/>
            <person name="Nakagawa K."/>
            <person name="Okumura K."/>
            <person name="Nagase T."/>
            <person name="Nomura N."/>
            <person name="Kikuchi H."/>
            <person name="Masuho Y."/>
            <person name="Yamashita R."/>
            <person name="Nakai K."/>
            <person name="Yada T."/>
            <person name="Nakamura Y."/>
            <person name="Ohara O."/>
            <person name="Isogai T."/>
            <person name="Sugano S."/>
        </authorList>
    </citation>
    <scope>NUCLEOTIDE SEQUENCE [LARGE SCALE MRNA]</scope>
    <source>
        <tissue>Cerebellum</tissue>
    </source>
</reference>
<reference key="4">
    <citation type="submission" date="2005-07" db="EMBL/GenBank/DDBJ databases">
        <authorList>
            <person name="Mural R.J."/>
            <person name="Istrail S."/>
            <person name="Sutton G.G."/>
            <person name="Florea L."/>
            <person name="Halpern A.L."/>
            <person name="Mobarry C.M."/>
            <person name="Lippert R."/>
            <person name="Walenz B."/>
            <person name="Shatkay H."/>
            <person name="Dew I."/>
            <person name="Miller J.R."/>
            <person name="Flanigan M.J."/>
            <person name="Edwards N.J."/>
            <person name="Bolanos R."/>
            <person name="Fasulo D."/>
            <person name="Halldorsson B.V."/>
            <person name="Hannenhalli S."/>
            <person name="Turner R."/>
            <person name="Yooseph S."/>
            <person name="Lu F."/>
            <person name="Nusskern D.R."/>
            <person name="Shue B.C."/>
            <person name="Zheng X.H."/>
            <person name="Zhong F."/>
            <person name="Delcher A.L."/>
            <person name="Huson D.H."/>
            <person name="Kravitz S.A."/>
            <person name="Mouchard L."/>
            <person name="Reinert K."/>
            <person name="Remington K.A."/>
            <person name="Clark A.G."/>
            <person name="Waterman M.S."/>
            <person name="Eichler E.E."/>
            <person name="Adams M.D."/>
            <person name="Hunkapiller M.W."/>
            <person name="Myers E.W."/>
            <person name="Venter J.C."/>
        </authorList>
    </citation>
    <scope>NUCLEOTIDE SEQUENCE [LARGE SCALE GENOMIC DNA]</scope>
</reference>
<reference key="5">
    <citation type="journal article" date="2004" name="Genome Res.">
        <title>The status, quality, and expansion of the NIH full-length cDNA project: the Mammalian Gene Collection (MGC).</title>
        <authorList>
            <consortium name="The MGC Project Team"/>
        </authorList>
    </citation>
    <scope>NUCLEOTIDE SEQUENCE [LARGE SCALE MRNA]</scope>
    <source>
        <tissue>Brain</tissue>
    </source>
</reference>
<reference key="6">
    <citation type="journal article" date="1998" name="J. Biol. Chem.">
        <title>Immunoaffinity purification and functional characterization of human transcription factor IIH and RNA polymerase II from clonal cell lines that conditionally express epitope-tagged subunits of the multiprotein complexes.</title>
        <authorList>
            <person name="Kershnar E."/>
            <person name="Wu S.-Y."/>
            <person name="Chiang C.-M."/>
        </authorList>
    </citation>
    <scope>FUNCTION</scope>
    <scope>IDENTIFICATION IN THE RNA POLYMERASE II CORE-COMPLEX</scope>
    <scope>SUBCELLULAR LOCATION</scope>
</reference>
<reference key="7">
    <citation type="journal article" date="2011" name="BMC Syst. Biol.">
        <title>Initial characterization of the human central proteome.</title>
        <authorList>
            <person name="Burkard T.R."/>
            <person name="Planyavsky M."/>
            <person name="Kaupe I."/>
            <person name="Breitwieser F.P."/>
            <person name="Buerckstuemmer T."/>
            <person name="Bennett K.L."/>
            <person name="Superti-Furga G."/>
            <person name="Colinge J."/>
        </authorList>
    </citation>
    <scope>IDENTIFICATION BY MASS SPECTROMETRY [LARGE SCALE ANALYSIS]</scope>
</reference>
<reference key="8">
    <citation type="journal article" date="2005" name="Nucleic Acids Res.">
        <title>Crystal structure and RNA binding of the Rpb4/Rpb7 subunits of human RNA polymerase II.</title>
        <authorList>
            <person name="Meka H."/>
            <person name="Werner F."/>
            <person name="Cordell S.C."/>
            <person name="Onesti S."/>
            <person name="Brick P."/>
        </authorList>
    </citation>
    <scope>X-RAY CRYSTALLOGRAPHY (2.7 ANGSTROMS) OF THE POL II RPB4-RPB7 SUBCOMPLEX</scope>
    <scope>RNA-BINDING</scope>
    <scope>MUTAGENESIS OF HIS-14; GLU-33; LYS-41; THR-90; ASN-93; LYS-94; PHE-107; SER-109; HIS-111; ARG-151; ASP-153 AND PHE-158</scope>
</reference>
<reference key="9">
    <citation type="journal article" date="2016" name="Nature">
        <title>Near-atomic resolution visualization of human transcription promoter opening.</title>
        <authorList>
            <person name="He Y."/>
            <person name="Yan C."/>
            <person name="Fang J."/>
            <person name="Inouye C."/>
            <person name="Tjian R."/>
            <person name="Ivanov I."/>
            <person name="Nogales E."/>
        </authorList>
    </citation>
    <scope>STRUCTURE BY ELECTRON MICROSCOPY (3.90 ANGSTROMS)</scope>
    <scope>FUNCTION OF POL II</scope>
    <scope>SUBUNIT</scope>
</reference>
<reference key="10">
    <citation type="journal article" date="2018" name="Nat. Struct. Mol. Biol.">
        <title>Architecture of Pol II(G) and molecular mechanism of transcription regulation by Gdown1.</title>
        <authorList>
            <person name="Jishage M."/>
            <person name="Yu X."/>
            <person name="Shi Y."/>
            <person name="Ganesan S.J."/>
            <person name="Chen W.Y."/>
            <person name="Sali A."/>
            <person name="Chait B.T."/>
            <person name="Asturias F.J."/>
            <person name="Roeder R.G."/>
        </authorList>
    </citation>
    <scope>STRUCTURE BY ELECTRON MICROSCOPY (3.90 ANGSTROMS)</scope>
    <scope>FUNCTION OF POL II</scope>
    <scope>SUBUNIT</scope>
</reference>
<accession>P62487</accession>
<accession>B2R5C0</accession>
<accession>P52433</accession>
<accession>Q2M1Z4</accession>
<gene>
    <name type="primary">POLR2G</name>
    <name type="synonym">RPB7</name>
</gene>
<feature type="chain" id="PRO_0000073986" description="DNA-directed RNA polymerase II subunit RPB7">
    <location>
        <begin position="1"/>
        <end position="172"/>
    </location>
</feature>
<feature type="mutagenesis site" description="Strongly reduces RNA-binding." evidence="2">
    <original>H</original>
    <variation>E</variation>
    <location>
        <position position="14"/>
    </location>
</feature>
<feature type="mutagenesis site" description="Strongly reduces RNA-binding." evidence="2">
    <original>E</original>
    <variation>K</variation>
    <location>
        <position position="33"/>
    </location>
</feature>
<feature type="mutagenesis site" description="Strongly reduces RNA-binding." evidence="2">
    <original>K</original>
    <variation>E</variation>
    <location>
        <position position="41"/>
    </location>
</feature>
<feature type="mutagenesis site" description="Reduces RNA-binding." evidence="2">
    <original>T</original>
    <variation>A</variation>
    <location>
        <position position="90"/>
    </location>
</feature>
<feature type="mutagenesis site" description="Reduces RNA-binding." evidence="2">
    <original>N</original>
    <variation>A</variation>
    <location>
        <position position="93"/>
    </location>
</feature>
<feature type="mutagenesis site" description="Reduces RNA-binding." evidence="2">
    <original>K</original>
    <variation>E</variation>
    <location>
        <position position="94"/>
    </location>
</feature>
<feature type="mutagenesis site" description="Reduces RNA-binding." evidence="2">
    <original>F</original>
    <variation>E</variation>
    <location>
        <position position="107"/>
    </location>
</feature>
<feature type="mutagenesis site" description="Strongly reduces RNA-binding." evidence="2">
    <original>S</original>
    <variation>A</variation>
    <location>
        <position position="109"/>
    </location>
</feature>
<feature type="mutagenesis site" description="Strongly reduces RNA-binding." evidence="2">
    <original>H</original>
    <variation>E</variation>
    <location>
        <position position="111"/>
    </location>
</feature>
<feature type="mutagenesis site" description="Strongly reduces RNA-binding." evidence="2">
    <original>R</original>
    <variation>E</variation>
    <location>
        <position position="151"/>
    </location>
</feature>
<feature type="mutagenesis site" description="Strongly reduces RNA-binding." evidence="2">
    <original>D</original>
    <variation>E</variation>
    <location>
        <position position="153"/>
    </location>
</feature>
<feature type="mutagenesis site" description="Strongly reduces RNA-binding." evidence="2">
    <original>F</original>
    <variation>A</variation>
    <location>
        <position position="158"/>
    </location>
</feature>
<feature type="strand" evidence="7">
    <location>
        <begin position="2"/>
        <end position="13"/>
    </location>
</feature>
<feature type="helix" evidence="7">
    <location>
        <begin position="15"/>
        <end position="17"/>
    </location>
</feature>
<feature type="helix" evidence="7">
    <location>
        <begin position="22"/>
        <end position="34"/>
    </location>
</feature>
<feature type="turn" evidence="7">
    <location>
        <begin position="40"/>
        <end position="42"/>
    </location>
</feature>
<feature type="strand" evidence="7">
    <location>
        <begin position="43"/>
        <end position="54"/>
    </location>
</feature>
<feature type="strand" evidence="7">
    <location>
        <begin position="64"/>
        <end position="77"/>
    </location>
</feature>
<feature type="strand" evidence="7">
    <location>
        <begin position="84"/>
        <end position="93"/>
    </location>
</feature>
<feature type="strand" evidence="7">
    <location>
        <begin position="96"/>
        <end position="101"/>
    </location>
</feature>
<feature type="strand" evidence="7">
    <location>
        <begin position="104"/>
        <end position="109"/>
    </location>
</feature>
<feature type="helix" evidence="7">
    <location>
        <begin position="110"/>
        <end position="112"/>
    </location>
</feature>
<feature type="strand" evidence="7">
    <location>
        <begin position="117"/>
        <end position="125"/>
    </location>
</feature>
<feature type="strand" evidence="7">
    <location>
        <begin position="127"/>
        <end position="130"/>
    </location>
</feature>
<feature type="strand" evidence="7">
    <location>
        <begin position="135"/>
        <end position="138"/>
    </location>
</feature>
<feature type="strand" evidence="7">
    <location>
        <begin position="142"/>
        <end position="153"/>
    </location>
</feature>
<feature type="strand" evidence="7">
    <location>
        <begin position="156"/>
        <end position="162"/>
    </location>
</feature>
<organism>
    <name type="scientific">Homo sapiens</name>
    <name type="common">Human</name>
    <dbReference type="NCBI Taxonomy" id="9606"/>
    <lineage>
        <taxon>Eukaryota</taxon>
        <taxon>Metazoa</taxon>
        <taxon>Chordata</taxon>
        <taxon>Craniata</taxon>
        <taxon>Vertebrata</taxon>
        <taxon>Euteleostomi</taxon>
        <taxon>Mammalia</taxon>
        <taxon>Eutheria</taxon>
        <taxon>Euarchontoglires</taxon>
        <taxon>Primates</taxon>
        <taxon>Haplorrhini</taxon>
        <taxon>Catarrhini</taxon>
        <taxon>Hominidae</taxon>
        <taxon>Homo</taxon>
    </lineage>
</organism>
<keyword id="KW-0002">3D-structure</keyword>
<keyword id="KW-0240">DNA-directed RNA polymerase</keyword>
<keyword id="KW-0539">Nucleus</keyword>
<keyword id="KW-1267">Proteomics identification</keyword>
<keyword id="KW-1185">Reference proteome</keyword>
<keyword id="KW-0694">RNA-binding</keyword>
<keyword id="KW-0804">Transcription</keyword>
<comment type="function">
    <text evidence="1 2 3 4 5">Core component of RNA polymerase II (Pol II), a DNA-dependent RNA polymerase which synthesizes mRNA precursors and many functional non-coding RNAs using the four ribonucleoside triphosphates as substrates. Pol II is the central component of the basal RNA polymerase II transcription machinery. It is composed of mobile elements that move relative to each other. POLR2G/RPB7 is part of a subcomplex with POLR2D/RPB4 that binds to a pocket formed by POLR2A/RPB1, POLR2B/RPB2 and POLR2F/RPABC2 at the base of the clamp element. The POLR2D/RPB4-POLR2G/RPB7 subcomplex seems to lock the clamp via POLR2G/RPB7 in the closed conformation thus preventing double-stranded DNA to enter the active site cleft. The POLR2D/RPB4-POLR2G/RPB7 subcomplex binds single-stranded DNA and RNA.</text>
</comment>
<comment type="subunit">
    <text evidence="2 3 4 5">Component of the RNA polymerase II (Pol II) core complex consisting of 12 subunits: a ten-subunit catalytic core composed of POLR2A/RPB1, POLR2B/RPB2, POLR2C/RPB3, POLR2I/RPB9, POLR2J/RPB11, POLR2E/RPABC1, POLR2F/RPABC2, POLR2H/RPABC3, POLR2K/RPABC4 and POLR2L/RPABC5 and a mobile stalk composed of two subunits POLR2D/RPB4 and POLR2G/RPB7, protruding from the core and functioning primarily in transcription initiation. Part of Pol II(G) complex, in which Pol II core associates with an additional subunit POLR2M; unlike conventional Pol II, Pol II(G) functions as a transcriptional repressor. Part of TBP-based Pol II pre-initiation complex (PIC), in which Pol II core assembles with general transcription factors and other specific initiation factors including GTF2E1, GTF2E2, GTF2F1, GTF2F2, TCEA1, ERCC2, ERCC3, GTF2H2, GTF2H3, GTF2H4, GTF2H5, GTF2A1, GTF2A2, GTF2B and TBP; this large multi-subunit PIC complex mediates DNA unwinding and targets Pol II core to the transcription start site where the first phosphodiester bond forms.</text>
</comment>
<comment type="interaction">
    <interactant intactId="EBI-347928">
        <id>P62487</id>
    </interactant>
    <interactant intactId="EBI-10247136">
        <id>Q5TBC7</id>
        <label>BCL2L15</label>
    </interactant>
    <organismsDiffer>false</organismsDiffer>
    <experiments>3</experiments>
</comment>
<comment type="interaction">
    <interactant intactId="EBI-347928">
        <id>P62487</id>
    </interactant>
    <interactant intactId="EBI-12030460">
        <id>Q8WYQ4-2</id>
        <label>C22orf15</label>
    </interactant>
    <organismsDiffer>false</organismsDiffer>
    <experiments>3</experiments>
</comment>
<comment type="interaction">
    <interactant intactId="EBI-347928">
        <id>P62487</id>
    </interactant>
    <interactant intactId="EBI-10292696">
        <id>Q96Q77</id>
        <label>CIB3</label>
    </interactant>
    <organismsDiffer>false</organismsDiffer>
    <experiments>3</experiments>
</comment>
<comment type="interaction">
    <interactant intactId="EBI-347928">
        <id>P62487</id>
    </interactant>
    <interactant intactId="EBI-310892">
        <id>Q9UHC6</id>
        <label>CNTNAP2</label>
    </interactant>
    <organismsDiffer>false</organismsDiffer>
    <experiments>3</experiments>
</comment>
<comment type="interaction">
    <interactant intactId="EBI-347928">
        <id>P62487</id>
    </interactant>
    <interactant intactId="EBI-1055572">
        <id>P17661</id>
        <label>DES</label>
    </interactant>
    <organismsDiffer>false</organismsDiffer>
    <experiments>3</experiments>
</comment>
<comment type="interaction">
    <interactant intactId="EBI-347928">
        <id>P62487</id>
    </interactant>
    <interactant intactId="EBI-1054321">
        <id>Q68J44</id>
        <label>DUSP29</label>
    </interactant>
    <organismsDiffer>false</organismsDiffer>
    <experiments>3</experiments>
</comment>
<comment type="interaction">
    <interactant intactId="EBI-347928">
        <id>P62487</id>
    </interactant>
    <interactant intactId="EBI-353818">
        <id>O15371</id>
        <label>EIF3D</label>
    </interactant>
    <organismsDiffer>false</organismsDiffer>
    <experiments>3</experiments>
</comment>
<comment type="interaction">
    <interactant intactId="EBI-347928">
        <id>P62487</id>
    </interactant>
    <interactant intactId="EBI-299104">
        <id>P38919</id>
        <label>EIF4A3</label>
    </interactant>
    <organismsDiffer>false</organismsDiffer>
    <experiments>3</experiments>
</comment>
<comment type="interaction">
    <interactant intactId="EBI-347928">
        <id>P62487</id>
    </interactant>
    <interactant intactId="EBI-3893419">
        <id>P15408</id>
        <label>FOSL2</label>
    </interactant>
    <organismsDiffer>false</organismsDiffer>
    <experiments>3</experiments>
</comment>
<comment type="interaction">
    <interactant intactId="EBI-347928">
        <id>P62487</id>
    </interactant>
    <interactant intactId="EBI-746309">
        <id>Q92917</id>
        <label>GPKOW</label>
    </interactant>
    <organismsDiffer>false</organismsDiffer>
    <experiments>3</experiments>
</comment>
<comment type="interaction">
    <interactant intactId="EBI-347928">
        <id>P62487</id>
    </interactant>
    <interactant intactId="EBI-11955357">
        <id>Q00444</id>
        <label>HOXC5</label>
    </interactant>
    <organismsDiffer>false</organismsDiffer>
    <experiments>4</experiments>
</comment>
<comment type="interaction">
    <interactant intactId="EBI-347928">
        <id>P62487</id>
    </interactant>
    <interactant intactId="EBI-355878">
        <id>P33176</id>
        <label>KIF5B</label>
    </interactant>
    <organismsDiffer>false</organismsDiffer>
    <experiments>3</experiments>
</comment>
<comment type="interaction">
    <interactant intactId="EBI-347928">
        <id>P62487</id>
    </interactant>
    <interactant intactId="EBI-11959475">
        <id>P25791-3</id>
        <label>LMO2</label>
    </interactant>
    <organismsDiffer>false</organismsDiffer>
    <experiments>4</experiments>
</comment>
<comment type="interaction">
    <interactant intactId="EBI-347928">
        <id>P62487</id>
    </interactant>
    <interactant intactId="EBI-959949">
        <id>P28482</id>
        <label>MAPK1</label>
    </interactant>
    <organismsDiffer>false</organismsDiffer>
    <experiments>3</experiments>
</comment>
<comment type="interaction">
    <interactant intactId="EBI-347928">
        <id>P62487</id>
    </interactant>
    <interactant intactId="EBI-9057006">
        <id>Q9UJX0</id>
        <label>OSGIN1</label>
    </interactant>
    <organismsDiffer>false</organismsDiffer>
    <experiments>3</experiments>
</comment>
<comment type="interaction">
    <interactant intactId="EBI-347928">
        <id>P62487</id>
    </interactant>
    <interactant intactId="EBI-3921217">
        <id>Q9HBI0</id>
        <label>PARVG</label>
    </interactant>
    <organismsDiffer>false</organismsDiffer>
    <experiments>3</experiments>
</comment>
<comment type="interaction">
    <interactant intactId="EBI-347928">
        <id>P62487</id>
    </interactant>
    <interactant intactId="EBI-1055079">
        <id>O15160</id>
        <label>POLR1C</label>
    </interactant>
    <organismsDiffer>false</organismsDiffer>
    <experiments>3</experiments>
</comment>
<comment type="interaction">
    <interactant intactId="EBI-347928">
        <id>P62487</id>
    </interactant>
    <interactant intactId="EBI-372312">
        <id>P28062-2</id>
        <label>PSMB8</label>
    </interactant>
    <organismsDiffer>false</organismsDiffer>
    <experiments>3</experiments>
</comment>
<comment type="interaction">
    <interactant intactId="EBI-347928">
        <id>P62487</id>
    </interactant>
    <interactant intactId="EBI-11119202">
        <id>Q9UL33-2</id>
        <label>TRAPPC2L</label>
    </interactant>
    <organismsDiffer>false</organismsDiffer>
    <experiments>3</experiments>
</comment>
<comment type="interaction">
    <interactant intactId="EBI-347928">
        <id>P62487</id>
    </interactant>
    <interactant intactId="EBI-2130449">
        <id>Q6AZZ1</id>
        <label>TRIM68</label>
    </interactant>
    <organismsDiffer>false</organismsDiffer>
    <experiments>3</experiments>
</comment>
<comment type="interaction">
    <interactant intactId="EBI-347928">
        <id>P62487</id>
    </interactant>
    <interactant intactId="EBI-372432">
        <id>Q8WW01</id>
        <label>TSEN15</label>
    </interactant>
    <organismsDiffer>false</organismsDiffer>
    <experiments>3</experiments>
</comment>
<comment type="interaction">
    <interactant intactId="EBI-347928">
        <id>P62487</id>
    </interactant>
    <interactant intactId="EBI-742943">
        <id>Q96BW1</id>
        <label>UPRT</label>
    </interactant>
    <organismsDiffer>false</organismsDiffer>
    <experiments>3</experiments>
</comment>
<comment type="interaction">
    <interactant intactId="EBI-347928">
        <id>P62487</id>
    </interactant>
    <interactant intactId="EBI-11741890">
        <id>Q86VK4-3</id>
        <label>ZNF410</label>
    </interactant>
    <organismsDiffer>false</organismsDiffer>
    <experiments>3</experiments>
</comment>
<comment type="subcellular location">
    <subcellularLocation>
        <location evidence="5">Nucleus</location>
    </subcellularLocation>
</comment>
<comment type="similarity">
    <text evidence="6">Belongs to the eukaryotic RPB7/RPC8 RNA polymerase subunit family.</text>
</comment>